<proteinExistence type="inferred from homology"/>
<protein>
    <recommendedName>
        <fullName evidence="1">UPF0237 protein NMA1909</fullName>
    </recommendedName>
</protein>
<sequence>MNNSVITVIGKDRVGIVYDVSKILAENRINILNISQQLMDDFFTMIILVDTSKCSKSRQEVLDLFAEESKKLALDIRMQNEEIFQAMHRI</sequence>
<evidence type="ECO:0000255" key="1">
    <source>
        <dbReference type="HAMAP-Rule" id="MF_01054"/>
    </source>
</evidence>
<gene>
    <name type="ordered locus">NMA1909</name>
</gene>
<comment type="similarity">
    <text evidence="1">Belongs to the UPF0237 family.</text>
</comment>
<name>Y1909_NEIMA</name>
<dbReference type="EMBL" id="AL157959">
    <property type="protein sequence ID" value="CAM09025.1"/>
    <property type="molecule type" value="Genomic_DNA"/>
</dbReference>
<dbReference type="PIR" id="F81818">
    <property type="entry name" value="F81818"/>
</dbReference>
<dbReference type="RefSeq" id="WP_002234162.1">
    <property type="nucleotide sequence ID" value="NC_003116.1"/>
</dbReference>
<dbReference type="SMR" id="Q9JTA3"/>
<dbReference type="EnsemblBacteria" id="CAM09025">
    <property type="protein sequence ID" value="CAM09025"/>
    <property type="gene ID" value="NMA1909"/>
</dbReference>
<dbReference type="KEGG" id="nma:NMA1909"/>
<dbReference type="HOGENOM" id="CLU_155669_0_1_4"/>
<dbReference type="Proteomes" id="UP000000626">
    <property type="component" value="Chromosome"/>
</dbReference>
<dbReference type="CDD" id="cd04872">
    <property type="entry name" value="ACT_1ZPV"/>
    <property type="match status" value="1"/>
</dbReference>
<dbReference type="FunFam" id="3.30.70.260:FF:000032">
    <property type="entry name" value="UPF0237 protein SP_0238"/>
    <property type="match status" value="1"/>
</dbReference>
<dbReference type="Gene3D" id="3.30.70.260">
    <property type="match status" value="1"/>
</dbReference>
<dbReference type="HAMAP" id="MF_01054">
    <property type="entry name" value="UPF0237"/>
    <property type="match status" value="1"/>
</dbReference>
<dbReference type="InterPro" id="IPR045865">
    <property type="entry name" value="ACT-like_dom_sf"/>
</dbReference>
<dbReference type="InterPro" id="IPR002912">
    <property type="entry name" value="ACT_dom"/>
</dbReference>
<dbReference type="InterPro" id="IPR050990">
    <property type="entry name" value="UPF0237/GcvR_regulator"/>
</dbReference>
<dbReference type="InterPro" id="IPR022986">
    <property type="entry name" value="UPF0237_ACT"/>
</dbReference>
<dbReference type="NCBIfam" id="NF001220">
    <property type="entry name" value="PRK00194.1"/>
    <property type="match status" value="1"/>
</dbReference>
<dbReference type="PANTHER" id="PTHR34875">
    <property type="entry name" value="UPF0237 PROTEIN MJ1558"/>
    <property type="match status" value="1"/>
</dbReference>
<dbReference type="PANTHER" id="PTHR34875:SF6">
    <property type="entry name" value="UPF0237 PROTEIN MJ1558"/>
    <property type="match status" value="1"/>
</dbReference>
<dbReference type="Pfam" id="PF13740">
    <property type="entry name" value="ACT_6"/>
    <property type="match status" value="1"/>
</dbReference>
<dbReference type="SUPFAM" id="SSF55021">
    <property type="entry name" value="ACT-like"/>
    <property type="match status" value="1"/>
</dbReference>
<dbReference type="PROSITE" id="PS51671">
    <property type="entry name" value="ACT"/>
    <property type="match status" value="1"/>
</dbReference>
<reference key="1">
    <citation type="journal article" date="2000" name="Nature">
        <title>Complete DNA sequence of a serogroup A strain of Neisseria meningitidis Z2491.</title>
        <authorList>
            <person name="Parkhill J."/>
            <person name="Achtman M."/>
            <person name="James K.D."/>
            <person name="Bentley S.D."/>
            <person name="Churcher C.M."/>
            <person name="Klee S.R."/>
            <person name="Morelli G."/>
            <person name="Basham D."/>
            <person name="Brown D."/>
            <person name="Chillingworth T."/>
            <person name="Davies R.M."/>
            <person name="Davis P."/>
            <person name="Devlin K."/>
            <person name="Feltwell T."/>
            <person name="Hamlin N."/>
            <person name="Holroyd S."/>
            <person name="Jagels K."/>
            <person name="Leather S."/>
            <person name="Moule S."/>
            <person name="Mungall K.L."/>
            <person name="Quail M.A."/>
            <person name="Rajandream M.A."/>
            <person name="Rutherford K.M."/>
            <person name="Simmonds M."/>
            <person name="Skelton J."/>
            <person name="Whitehead S."/>
            <person name="Spratt B.G."/>
            <person name="Barrell B.G."/>
        </authorList>
    </citation>
    <scope>NUCLEOTIDE SEQUENCE [LARGE SCALE GENOMIC DNA]</scope>
    <source>
        <strain>DSM 15465 / Z2491</strain>
    </source>
</reference>
<feature type="chain" id="PRO_0000219904" description="UPF0237 protein NMA1909">
    <location>
        <begin position="1"/>
        <end position="90"/>
    </location>
</feature>
<feature type="domain" description="ACT" evidence="1">
    <location>
        <begin position="5"/>
        <end position="83"/>
    </location>
</feature>
<organism>
    <name type="scientific">Neisseria meningitidis serogroup A / serotype 4A (strain DSM 15465 / Z2491)</name>
    <dbReference type="NCBI Taxonomy" id="122587"/>
    <lineage>
        <taxon>Bacteria</taxon>
        <taxon>Pseudomonadati</taxon>
        <taxon>Pseudomonadota</taxon>
        <taxon>Betaproteobacteria</taxon>
        <taxon>Neisseriales</taxon>
        <taxon>Neisseriaceae</taxon>
        <taxon>Neisseria</taxon>
    </lineage>
</organism>
<accession>Q9JTA3</accession>
<accession>A1ITB2</accession>